<organism>
    <name type="scientific">Pseudomonas fluorescens (strain ATCC BAA-477 / NRRL B-23932 / Pf-5)</name>
    <dbReference type="NCBI Taxonomy" id="220664"/>
    <lineage>
        <taxon>Bacteria</taxon>
        <taxon>Pseudomonadati</taxon>
        <taxon>Pseudomonadota</taxon>
        <taxon>Gammaproteobacteria</taxon>
        <taxon>Pseudomonadales</taxon>
        <taxon>Pseudomonadaceae</taxon>
        <taxon>Pseudomonas</taxon>
    </lineage>
</organism>
<evidence type="ECO:0000255" key="1">
    <source>
        <dbReference type="HAMAP-Rule" id="MF_01632"/>
    </source>
</evidence>
<gene>
    <name evidence="1" type="primary">ubiC</name>
    <name type="ordered locus">PFL_6105</name>
</gene>
<feature type="chain" id="PRO_0000240556" description="Probable chorismate pyruvate-lyase">
    <location>
        <begin position="1"/>
        <end position="187"/>
    </location>
</feature>
<feature type="binding site" evidence="1">
    <location>
        <position position="80"/>
    </location>
    <ligand>
        <name>substrate</name>
    </ligand>
</feature>
<feature type="binding site" evidence="1">
    <location>
        <position position="118"/>
    </location>
    <ligand>
        <name>substrate</name>
    </ligand>
</feature>
<feature type="binding site" evidence="1">
    <location>
        <position position="170"/>
    </location>
    <ligand>
        <name>substrate</name>
    </ligand>
</feature>
<name>UBIC_PSEF5</name>
<dbReference type="EC" id="4.1.3.40" evidence="1"/>
<dbReference type="EMBL" id="CP000076">
    <property type="protein sequence ID" value="AAY95293.1"/>
    <property type="molecule type" value="Genomic_DNA"/>
</dbReference>
<dbReference type="RefSeq" id="WP_011064272.1">
    <property type="nucleotide sequence ID" value="NC_004129.6"/>
</dbReference>
<dbReference type="SMR" id="Q4K3M0"/>
<dbReference type="STRING" id="220664.PFL_6105"/>
<dbReference type="KEGG" id="pfl:PFL_6105"/>
<dbReference type="eggNOG" id="COG3161">
    <property type="taxonomic scope" value="Bacteria"/>
</dbReference>
<dbReference type="HOGENOM" id="CLU_096824_3_0_6"/>
<dbReference type="UniPathway" id="UPA00232"/>
<dbReference type="Proteomes" id="UP000008540">
    <property type="component" value="Chromosome"/>
</dbReference>
<dbReference type="GO" id="GO:0005829">
    <property type="term" value="C:cytosol"/>
    <property type="evidence" value="ECO:0007669"/>
    <property type="project" value="TreeGrafter"/>
</dbReference>
<dbReference type="GO" id="GO:0008813">
    <property type="term" value="F:chorismate lyase activity"/>
    <property type="evidence" value="ECO:0007669"/>
    <property type="project" value="UniProtKB-UniRule"/>
</dbReference>
<dbReference type="GO" id="GO:0042866">
    <property type="term" value="P:pyruvate biosynthetic process"/>
    <property type="evidence" value="ECO:0007669"/>
    <property type="project" value="UniProtKB-UniRule"/>
</dbReference>
<dbReference type="GO" id="GO:0006744">
    <property type="term" value="P:ubiquinone biosynthetic process"/>
    <property type="evidence" value="ECO:0007669"/>
    <property type="project" value="UniProtKB-UniRule"/>
</dbReference>
<dbReference type="Gene3D" id="3.40.1410.10">
    <property type="entry name" value="Chorismate lyase-like"/>
    <property type="match status" value="1"/>
</dbReference>
<dbReference type="HAMAP" id="MF_01632">
    <property type="entry name" value="UbiC"/>
    <property type="match status" value="1"/>
</dbReference>
<dbReference type="InterPro" id="IPR007440">
    <property type="entry name" value="Chorismate--pyruvate_lyase"/>
</dbReference>
<dbReference type="InterPro" id="IPR028978">
    <property type="entry name" value="Chorismate_lyase_/UTRA_dom_sf"/>
</dbReference>
<dbReference type="PANTHER" id="PTHR38683">
    <property type="entry name" value="CHORISMATE PYRUVATE-LYASE"/>
    <property type="match status" value="1"/>
</dbReference>
<dbReference type="PANTHER" id="PTHR38683:SF1">
    <property type="entry name" value="CHORISMATE PYRUVATE-LYASE"/>
    <property type="match status" value="1"/>
</dbReference>
<dbReference type="Pfam" id="PF04345">
    <property type="entry name" value="Chor_lyase"/>
    <property type="match status" value="1"/>
</dbReference>
<dbReference type="SUPFAM" id="SSF64288">
    <property type="entry name" value="Chorismate lyase-like"/>
    <property type="match status" value="1"/>
</dbReference>
<keyword id="KW-0963">Cytoplasm</keyword>
<keyword id="KW-0456">Lyase</keyword>
<keyword id="KW-0670">Pyruvate</keyword>
<keyword id="KW-0831">Ubiquinone biosynthesis</keyword>
<comment type="function">
    <text evidence="1">Removes the pyruvyl group from chorismate, with concomitant aromatization of the ring, to provide 4-hydroxybenzoate (4HB) for the ubiquinone pathway.</text>
</comment>
<comment type="catalytic activity">
    <reaction evidence="1">
        <text>chorismate = 4-hydroxybenzoate + pyruvate</text>
        <dbReference type="Rhea" id="RHEA:16505"/>
        <dbReference type="ChEBI" id="CHEBI:15361"/>
        <dbReference type="ChEBI" id="CHEBI:17879"/>
        <dbReference type="ChEBI" id="CHEBI:29748"/>
        <dbReference type="EC" id="4.1.3.40"/>
    </reaction>
</comment>
<comment type="pathway">
    <text evidence="1">Cofactor biosynthesis; ubiquinone biosynthesis.</text>
</comment>
<comment type="subcellular location">
    <subcellularLocation>
        <location evidence="1">Cytoplasm</location>
    </subcellularLocation>
</comment>
<comment type="similarity">
    <text evidence="1">Belongs to the UbiC family.</text>
</comment>
<sequence length="187" mass="20901">MPHSMPPAPAPIWLVQSRLSPFPGTAVANWLFDEGSLTRRLTRLSHNAFSVTPLVQEWQTLRNDECAALGLPEQSEGWVREVYLRGHGQAWVFARSVAARSALLEGGLNIDELGSRSLGELLFCDQAFTRQPIEVCRYPRHWLPAAVADNGLWGRRSRFDRGPLSLLVAEIFLPSLWTAIDARPEAC</sequence>
<reference key="1">
    <citation type="journal article" date="2005" name="Nat. Biotechnol.">
        <title>Complete genome sequence of the plant commensal Pseudomonas fluorescens Pf-5.</title>
        <authorList>
            <person name="Paulsen I.T."/>
            <person name="Press C.M."/>
            <person name="Ravel J."/>
            <person name="Kobayashi D.Y."/>
            <person name="Myers G.S.A."/>
            <person name="Mavrodi D.V."/>
            <person name="DeBoy R.T."/>
            <person name="Seshadri R."/>
            <person name="Ren Q."/>
            <person name="Madupu R."/>
            <person name="Dodson R.J."/>
            <person name="Durkin A.S."/>
            <person name="Brinkac L.M."/>
            <person name="Daugherty S.C."/>
            <person name="Sullivan S.A."/>
            <person name="Rosovitz M.J."/>
            <person name="Gwinn M.L."/>
            <person name="Zhou L."/>
            <person name="Schneider D.J."/>
            <person name="Cartinhour S.W."/>
            <person name="Nelson W.C."/>
            <person name="Weidman J."/>
            <person name="Watkins K."/>
            <person name="Tran K."/>
            <person name="Khouri H."/>
            <person name="Pierson E.A."/>
            <person name="Pierson L.S. III"/>
            <person name="Thomashow L.S."/>
            <person name="Loper J.E."/>
        </authorList>
    </citation>
    <scope>NUCLEOTIDE SEQUENCE [LARGE SCALE GENOMIC DNA]</scope>
    <source>
        <strain>ATCC BAA-477 / NRRL B-23932 / Pf-5</strain>
    </source>
</reference>
<protein>
    <recommendedName>
        <fullName evidence="1">Probable chorismate pyruvate-lyase</fullName>
        <shortName evidence="1">CL</shortName>
        <shortName evidence="1">CPL</shortName>
        <ecNumber evidence="1">4.1.3.40</ecNumber>
    </recommendedName>
</protein>
<accession>Q4K3M0</accession>
<proteinExistence type="inferred from homology"/>